<accession>P61248</accession>
<feature type="chain" id="PRO_0000166116" description="Retinal rod rhodopsin-sensitive cGMP 3',5'-cyclic phosphodiesterase subunit gamma">
    <location>
        <begin position="1"/>
        <end position="87"/>
    </location>
</feature>
<feature type="region of interest" description="Disordered" evidence="3">
    <location>
        <begin position="1"/>
        <end position="55"/>
    </location>
</feature>
<feature type="compositionally biased region" description="Basic and acidic residues" evidence="3">
    <location>
        <begin position="1"/>
        <end position="12"/>
    </location>
</feature>
<feature type="compositionally biased region" description="Basic residues" evidence="3">
    <location>
        <begin position="26"/>
        <end position="44"/>
    </location>
</feature>
<feature type="modified residue" description="N-acetylmethionine" evidence="2">
    <location>
        <position position="1"/>
    </location>
</feature>
<reference key="1">
    <citation type="thesis" date="1997" institute="University of Cambridge" country="United Kingdom">
        <title>Molecular genetic investigations into the inherited progressive retinal degenerations of dogs and cats.</title>
        <authorList>
            <person name="Gould D.J."/>
        </authorList>
    </citation>
    <scope>NUCLEOTIDE SEQUENCE [GENOMIC DNA]</scope>
</reference>
<gene>
    <name type="primary">PDE6G</name>
    <name type="synonym">PDEG</name>
</gene>
<keyword id="KW-0007">Acetylation</keyword>
<keyword id="KW-0140">cGMP</keyword>
<keyword id="KW-0378">Hydrolase</keyword>
<keyword id="KW-1185">Reference proteome</keyword>
<keyword id="KW-0716">Sensory transduction</keyword>
<keyword id="KW-0844">Vision</keyword>
<comment type="function">
    <text evidence="1">Participates in processes of transmission and amplification of the visual signal. cGMP-PDEs are the effector molecules in G-protein-mediated phototransduction in vertebrate rods and cones (By similarity).</text>
</comment>
<comment type="catalytic activity">
    <reaction>
        <text>3',5'-cyclic GMP + H2O = GMP + H(+)</text>
        <dbReference type="Rhea" id="RHEA:16957"/>
        <dbReference type="ChEBI" id="CHEBI:15377"/>
        <dbReference type="ChEBI" id="CHEBI:15378"/>
        <dbReference type="ChEBI" id="CHEBI:57746"/>
        <dbReference type="ChEBI" id="CHEBI:58115"/>
        <dbReference type="EC" id="3.1.4.35"/>
    </reaction>
</comment>
<comment type="subunit">
    <text evidence="1">Oligomer composed of two catalytic chains (alpha and beta), an inhibitory chain (gamma) and the delta chain.</text>
</comment>
<comment type="similarity">
    <text evidence="4">Belongs to the rod/cone cGMP-PDE gamma subunit family.</text>
</comment>
<organism>
    <name type="scientific">Felis catus</name>
    <name type="common">Cat</name>
    <name type="synonym">Felis silvestris catus</name>
    <dbReference type="NCBI Taxonomy" id="9685"/>
    <lineage>
        <taxon>Eukaryota</taxon>
        <taxon>Metazoa</taxon>
        <taxon>Chordata</taxon>
        <taxon>Craniata</taxon>
        <taxon>Vertebrata</taxon>
        <taxon>Euteleostomi</taxon>
        <taxon>Mammalia</taxon>
        <taxon>Eutheria</taxon>
        <taxon>Laurasiatheria</taxon>
        <taxon>Carnivora</taxon>
        <taxon>Feliformia</taxon>
        <taxon>Felidae</taxon>
        <taxon>Felinae</taxon>
        <taxon>Felis</taxon>
    </lineage>
</organism>
<dbReference type="EC" id="3.1.4.35"/>
<dbReference type="EMBL" id="AJ417434">
    <property type="protein sequence ID" value="CAD10146.1"/>
    <property type="molecule type" value="Genomic_DNA"/>
</dbReference>
<dbReference type="RefSeq" id="XP_019673941.1">
    <property type="nucleotide sequence ID" value="XM_019818382.2"/>
</dbReference>
<dbReference type="BMRB" id="P61248"/>
<dbReference type="SMR" id="P61248"/>
<dbReference type="FunCoup" id="P61248">
    <property type="interactions" value="4"/>
</dbReference>
<dbReference type="STRING" id="9685.ENSFCAP00000011984"/>
<dbReference type="PaxDb" id="9685-ENSFCAP00000011984"/>
<dbReference type="Ensembl" id="ENSFCAT00000012926.5">
    <property type="protein sequence ID" value="ENSFCAP00000011984.2"/>
    <property type="gene ID" value="ENSFCAG00000012923.5"/>
</dbReference>
<dbReference type="GeneID" id="101088443"/>
<dbReference type="KEGG" id="fca:101088443"/>
<dbReference type="CTD" id="5148"/>
<dbReference type="VGNC" id="VGNC:68763">
    <property type="gene designation" value="PDE6G"/>
</dbReference>
<dbReference type="eggNOG" id="ENOG502S20G">
    <property type="taxonomic scope" value="Eukaryota"/>
</dbReference>
<dbReference type="GeneTree" id="ENSGT00390000013260"/>
<dbReference type="HOGENOM" id="CLU_170469_0_0_1"/>
<dbReference type="InParanoid" id="P61248"/>
<dbReference type="OMA" id="KGRGWHP"/>
<dbReference type="OrthoDB" id="8525078at2759"/>
<dbReference type="TreeFam" id="TF333297"/>
<dbReference type="Proteomes" id="UP000011712">
    <property type="component" value="Chromosome E1"/>
</dbReference>
<dbReference type="Bgee" id="ENSFCAG00000012923">
    <property type="expression patterns" value="Expressed in eyeball of camera-type eye and 8 other cell types or tissues"/>
</dbReference>
<dbReference type="GO" id="GO:0042622">
    <property type="term" value="C:photoreceptor outer segment membrane"/>
    <property type="evidence" value="ECO:0000318"/>
    <property type="project" value="GO_Central"/>
</dbReference>
<dbReference type="GO" id="GO:0047555">
    <property type="term" value="F:3',5'-cyclic-GMP phosphodiesterase activity"/>
    <property type="evidence" value="ECO:0007669"/>
    <property type="project" value="UniProtKB-EC"/>
</dbReference>
<dbReference type="GO" id="GO:0030553">
    <property type="term" value="F:cGMP binding"/>
    <property type="evidence" value="ECO:0007669"/>
    <property type="project" value="InterPro"/>
</dbReference>
<dbReference type="GO" id="GO:0045742">
    <property type="term" value="P:positive regulation of epidermal growth factor receptor signaling pathway"/>
    <property type="evidence" value="ECO:0000318"/>
    <property type="project" value="GO_Central"/>
</dbReference>
<dbReference type="GO" id="GO:0045745">
    <property type="term" value="P:positive regulation of G protein-coupled receptor signaling pathway"/>
    <property type="evidence" value="ECO:0000318"/>
    <property type="project" value="GO_Central"/>
</dbReference>
<dbReference type="GO" id="GO:0007601">
    <property type="term" value="P:visual perception"/>
    <property type="evidence" value="ECO:0007669"/>
    <property type="project" value="UniProtKB-KW"/>
</dbReference>
<dbReference type="FunFam" id="4.10.1120.10:FF:000001">
    <property type="entry name" value="retinal rod rhodopsin-sensitive cGMP 3',5'-cyclic phosphodiesterase subunit gamma"/>
    <property type="match status" value="1"/>
</dbReference>
<dbReference type="Gene3D" id="4.10.1120.10">
    <property type="entry name" value="Retinal cGMP phosphodiesterase, gamma subunit"/>
    <property type="match status" value="1"/>
</dbReference>
<dbReference type="InterPro" id="IPR006952">
    <property type="entry name" value="PDE6_gamma"/>
</dbReference>
<dbReference type="InterPro" id="IPR037030">
    <property type="entry name" value="PDE6_gamma_sf"/>
</dbReference>
<dbReference type="PANTHER" id="PTHR12122">
    <property type="entry name" value="RETINAL CONE RHODOPSIN-SENSITIVE CGMP 3',5'-CYCLIC PHOSPHODIESTERASE GAMMA-SUBUNIT-RELATED"/>
    <property type="match status" value="1"/>
</dbReference>
<dbReference type="PANTHER" id="PTHR12122:SF4">
    <property type="entry name" value="RETINAL ROD RHODOPSIN-SENSITIVE CGMP 3',5'-CYCLIC PHOSPHODIESTERASE SUBUNIT GAMMA"/>
    <property type="match status" value="1"/>
</dbReference>
<dbReference type="Pfam" id="PF04868">
    <property type="entry name" value="PDE6_gamma"/>
    <property type="match status" value="1"/>
</dbReference>
<dbReference type="PIRSF" id="PIRSF000969">
    <property type="entry name" value="35-cGMP_Pdiase_g"/>
    <property type="match status" value="1"/>
</dbReference>
<name>CNRG_FELCA</name>
<proteinExistence type="inferred from homology"/>
<sequence length="87" mass="9651">MNLEPPKAEIRSATRVIGGPVTPRKGPPKFKQRQTRQFKSKPPKKGVQGFGDDIPGMEGLGTDITVICPWEAFNHLELHELAQYGII</sequence>
<protein>
    <recommendedName>
        <fullName>Retinal rod rhodopsin-sensitive cGMP 3',5'-cyclic phosphodiesterase subunit gamma</fullName>
        <shortName>GMP-PDE gamma</shortName>
        <ecNumber>3.1.4.35</ecNumber>
    </recommendedName>
</protein>
<evidence type="ECO:0000250" key="1"/>
<evidence type="ECO:0000250" key="2">
    <source>
        <dbReference type="UniProtKB" id="P04972"/>
    </source>
</evidence>
<evidence type="ECO:0000256" key="3">
    <source>
        <dbReference type="SAM" id="MobiDB-lite"/>
    </source>
</evidence>
<evidence type="ECO:0000305" key="4"/>